<name>RS5_PSYA2</name>
<reference key="1">
    <citation type="journal article" date="2010" name="Appl. Environ. Microbiol.">
        <title>The genome sequence of Psychrobacter arcticus 273-4, a psychroactive Siberian permafrost bacterium, reveals mechanisms for adaptation to low-temperature growth.</title>
        <authorList>
            <person name="Ayala-del-Rio H.L."/>
            <person name="Chain P.S."/>
            <person name="Grzymski J.J."/>
            <person name="Ponder M.A."/>
            <person name="Ivanova N."/>
            <person name="Bergholz P.W."/>
            <person name="Di Bartolo G."/>
            <person name="Hauser L."/>
            <person name="Land M."/>
            <person name="Bakermans C."/>
            <person name="Rodrigues D."/>
            <person name="Klappenbach J."/>
            <person name="Zarka D."/>
            <person name="Larimer F."/>
            <person name="Richardson P."/>
            <person name="Murray A."/>
            <person name="Thomashow M."/>
            <person name="Tiedje J.M."/>
        </authorList>
    </citation>
    <scope>NUCLEOTIDE SEQUENCE [LARGE SCALE GENOMIC DNA]</scope>
    <source>
        <strain>DSM 17307 / VKM B-2377 / 273-4</strain>
    </source>
</reference>
<feature type="chain" id="PRO_0000230364" description="Small ribosomal subunit protein uS5">
    <location>
        <begin position="1"/>
        <end position="171"/>
    </location>
</feature>
<feature type="domain" description="S5 DRBM" evidence="1">
    <location>
        <begin position="16"/>
        <end position="79"/>
    </location>
</feature>
<evidence type="ECO:0000255" key="1">
    <source>
        <dbReference type="HAMAP-Rule" id="MF_01307"/>
    </source>
</evidence>
<evidence type="ECO:0000305" key="2"/>
<organism>
    <name type="scientific">Psychrobacter arcticus (strain DSM 17307 / VKM B-2377 / 273-4)</name>
    <dbReference type="NCBI Taxonomy" id="259536"/>
    <lineage>
        <taxon>Bacteria</taxon>
        <taxon>Pseudomonadati</taxon>
        <taxon>Pseudomonadota</taxon>
        <taxon>Gammaproteobacteria</taxon>
        <taxon>Moraxellales</taxon>
        <taxon>Moraxellaceae</taxon>
        <taxon>Psychrobacter</taxon>
    </lineage>
</organism>
<accession>Q4FUD9</accession>
<keyword id="KW-1185">Reference proteome</keyword>
<keyword id="KW-0687">Ribonucleoprotein</keyword>
<keyword id="KW-0689">Ribosomal protein</keyword>
<keyword id="KW-0694">RNA-binding</keyword>
<keyword id="KW-0699">rRNA-binding</keyword>
<gene>
    <name evidence="1" type="primary">rpsE</name>
    <name type="ordered locus">Psyc_0506</name>
</gene>
<sequence>MARNDKNDKNEQTDGLVERLVTVDRVAKVVKGGRIFSFTALTVVGDGNGRVGFGRGKAREVPAAIQKALEAAKRNMITVELNDATLYHPIKARHGASKVYMQPASEGTGVIAGGAMRAVLEVAGVKDVLTKCYGSTNTANVVRATFNGLRDMSTPEKMAAKRGKSVDEILG</sequence>
<comment type="function">
    <text evidence="1">With S4 and S12 plays an important role in translational accuracy.</text>
</comment>
<comment type="function">
    <text evidence="1">Located at the back of the 30S subunit body where it stabilizes the conformation of the head with respect to the body.</text>
</comment>
<comment type="subunit">
    <text evidence="1">Part of the 30S ribosomal subunit. Contacts proteins S4 and S8.</text>
</comment>
<comment type="domain">
    <text>The N-terminal domain interacts with the head of the 30S subunit; the C-terminal domain interacts with the body and contacts protein S4. The interaction surface between S4 and S5 is involved in control of translational fidelity.</text>
</comment>
<comment type="similarity">
    <text evidence="1">Belongs to the universal ribosomal protein uS5 family.</text>
</comment>
<proteinExistence type="inferred from homology"/>
<dbReference type="EMBL" id="CP000082">
    <property type="protein sequence ID" value="AAZ18369.1"/>
    <property type="molecule type" value="Genomic_DNA"/>
</dbReference>
<dbReference type="RefSeq" id="WP_010196711.1">
    <property type="nucleotide sequence ID" value="NC_007204.1"/>
</dbReference>
<dbReference type="SMR" id="Q4FUD9"/>
<dbReference type="STRING" id="259536.Psyc_0506"/>
<dbReference type="GeneID" id="60255470"/>
<dbReference type="KEGG" id="par:Psyc_0506"/>
<dbReference type="eggNOG" id="COG0098">
    <property type="taxonomic scope" value="Bacteria"/>
</dbReference>
<dbReference type="HOGENOM" id="CLU_065898_2_2_6"/>
<dbReference type="OrthoDB" id="9809045at2"/>
<dbReference type="Proteomes" id="UP000000546">
    <property type="component" value="Chromosome"/>
</dbReference>
<dbReference type="GO" id="GO:0015935">
    <property type="term" value="C:small ribosomal subunit"/>
    <property type="evidence" value="ECO:0007669"/>
    <property type="project" value="InterPro"/>
</dbReference>
<dbReference type="GO" id="GO:0019843">
    <property type="term" value="F:rRNA binding"/>
    <property type="evidence" value="ECO:0007669"/>
    <property type="project" value="UniProtKB-UniRule"/>
</dbReference>
<dbReference type="GO" id="GO:0003735">
    <property type="term" value="F:structural constituent of ribosome"/>
    <property type="evidence" value="ECO:0007669"/>
    <property type="project" value="InterPro"/>
</dbReference>
<dbReference type="GO" id="GO:0006412">
    <property type="term" value="P:translation"/>
    <property type="evidence" value="ECO:0007669"/>
    <property type="project" value="UniProtKB-UniRule"/>
</dbReference>
<dbReference type="FunFam" id="3.30.160.20:FF:000001">
    <property type="entry name" value="30S ribosomal protein S5"/>
    <property type="match status" value="1"/>
</dbReference>
<dbReference type="FunFam" id="3.30.230.10:FF:000002">
    <property type="entry name" value="30S ribosomal protein S5"/>
    <property type="match status" value="1"/>
</dbReference>
<dbReference type="Gene3D" id="3.30.160.20">
    <property type="match status" value="1"/>
</dbReference>
<dbReference type="Gene3D" id="3.30.230.10">
    <property type="match status" value="1"/>
</dbReference>
<dbReference type="HAMAP" id="MF_01307_B">
    <property type="entry name" value="Ribosomal_uS5_B"/>
    <property type="match status" value="1"/>
</dbReference>
<dbReference type="InterPro" id="IPR020568">
    <property type="entry name" value="Ribosomal_Su5_D2-typ_SF"/>
</dbReference>
<dbReference type="InterPro" id="IPR000851">
    <property type="entry name" value="Ribosomal_uS5"/>
</dbReference>
<dbReference type="InterPro" id="IPR005712">
    <property type="entry name" value="Ribosomal_uS5_bac-type"/>
</dbReference>
<dbReference type="InterPro" id="IPR005324">
    <property type="entry name" value="Ribosomal_uS5_C"/>
</dbReference>
<dbReference type="InterPro" id="IPR013810">
    <property type="entry name" value="Ribosomal_uS5_N"/>
</dbReference>
<dbReference type="InterPro" id="IPR018192">
    <property type="entry name" value="Ribosomal_uS5_N_CS"/>
</dbReference>
<dbReference type="InterPro" id="IPR014721">
    <property type="entry name" value="Ribsml_uS5_D2-typ_fold_subgr"/>
</dbReference>
<dbReference type="NCBIfam" id="TIGR01021">
    <property type="entry name" value="rpsE_bact"/>
    <property type="match status" value="1"/>
</dbReference>
<dbReference type="PANTHER" id="PTHR48277">
    <property type="entry name" value="MITOCHONDRIAL RIBOSOMAL PROTEIN S5"/>
    <property type="match status" value="1"/>
</dbReference>
<dbReference type="PANTHER" id="PTHR48277:SF1">
    <property type="entry name" value="MITOCHONDRIAL RIBOSOMAL PROTEIN S5"/>
    <property type="match status" value="1"/>
</dbReference>
<dbReference type="Pfam" id="PF00333">
    <property type="entry name" value="Ribosomal_S5"/>
    <property type="match status" value="1"/>
</dbReference>
<dbReference type="Pfam" id="PF03719">
    <property type="entry name" value="Ribosomal_S5_C"/>
    <property type="match status" value="1"/>
</dbReference>
<dbReference type="SUPFAM" id="SSF54768">
    <property type="entry name" value="dsRNA-binding domain-like"/>
    <property type="match status" value="1"/>
</dbReference>
<dbReference type="SUPFAM" id="SSF54211">
    <property type="entry name" value="Ribosomal protein S5 domain 2-like"/>
    <property type="match status" value="1"/>
</dbReference>
<dbReference type="PROSITE" id="PS00585">
    <property type="entry name" value="RIBOSOMAL_S5"/>
    <property type="match status" value="1"/>
</dbReference>
<dbReference type="PROSITE" id="PS50881">
    <property type="entry name" value="S5_DSRBD"/>
    <property type="match status" value="1"/>
</dbReference>
<protein>
    <recommendedName>
        <fullName evidence="1">Small ribosomal subunit protein uS5</fullName>
    </recommendedName>
    <alternativeName>
        <fullName evidence="2">30S ribosomal protein S5</fullName>
    </alternativeName>
</protein>